<gene>
    <name evidence="1" type="primary">menG</name>
    <name type="ordered locus">Bcav_3232</name>
</gene>
<comment type="function">
    <text evidence="1">Methyltransferase required for the conversion of demethylmenaquinol (DMKH2) to menaquinol (MKH2).</text>
</comment>
<comment type="catalytic activity">
    <reaction evidence="1">
        <text>a 2-demethylmenaquinol + S-adenosyl-L-methionine = a menaquinol + S-adenosyl-L-homocysteine + H(+)</text>
        <dbReference type="Rhea" id="RHEA:42640"/>
        <dbReference type="Rhea" id="RHEA-COMP:9539"/>
        <dbReference type="Rhea" id="RHEA-COMP:9563"/>
        <dbReference type="ChEBI" id="CHEBI:15378"/>
        <dbReference type="ChEBI" id="CHEBI:18151"/>
        <dbReference type="ChEBI" id="CHEBI:55437"/>
        <dbReference type="ChEBI" id="CHEBI:57856"/>
        <dbReference type="ChEBI" id="CHEBI:59789"/>
        <dbReference type="EC" id="2.1.1.163"/>
    </reaction>
</comment>
<comment type="pathway">
    <text evidence="1">Quinol/quinone metabolism; menaquinone biosynthesis; menaquinol from 1,4-dihydroxy-2-naphthoate: step 2/2.</text>
</comment>
<comment type="similarity">
    <text evidence="1">Belongs to the class I-like SAM-binding methyltransferase superfamily. MenG/UbiE family.</text>
</comment>
<organism>
    <name type="scientific">Beutenbergia cavernae (strain ATCC BAA-8 / DSM 12333 / CCUG 43141 / JCM 11478 / NBRC 16432 / NCIMB 13614 / HKI 0122)</name>
    <dbReference type="NCBI Taxonomy" id="471853"/>
    <lineage>
        <taxon>Bacteria</taxon>
        <taxon>Bacillati</taxon>
        <taxon>Actinomycetota</taxon>
        <taxon>Actinomycetes</taxon>
        <taxon>Micrococcales</taxon>
        <taxon>Beutenbergiaceae</taxon>
        <taxon>Beutenbergia</taxon>
    </lineage>
</organism>
<proteinExistence type="inferred from homology"/>
<protein>
    <recommendedName>
        <fullName evidence="1">Demethylmenaquinone methyltransferase</fullName>
        <ecNumber evidence="1">2.1.1.163</ecNumber>
    </recommendedName>
</protein>
<keyword id="KW-0474">Menaquinone biosynthesis</keyword>
<keyword id="KW-0489">Methyltransferase</keyword>
<keyword id="KW-1185">Reference proteome</keyword>
<keyword id="KW-0949">S-adenosyl-L-methionine</keyword>
<keyword id="KW-0808">Transferase</keyword>
<name>MENG_BEUC1</name>
<evidence type="ECO:0000255" key="1">
    <source>
        <dbReference type="HAMAP-Rule" id="MF_01813"/>
    </source>
</evidence>
<reference key="1">
    <citation type="journal article" date="2009" name="Stand. Genomic Sci.">
        <title>Complete genome sequence of Beutenbergia cavernae type strain (HKI 0122).</title>
        <authorList>
            <person name="Land M."/>
            <person name="Pukall R."/>
            <person name="Abt B."/>
            <person name="Goker M."/>
            <person name="Rohde M."/>
            <person name="Glavina Del Rio T."/>
            <person name="Tice H."/>
            <person name="Copeland A."/>
            <person name="Cheng J.F."/>
            <person name="Lucas S."/>
            <person name="Chen F."/>
            <person name="Nolan M."/>
            <person name="Bruce D."/>
            <person name="Goodwin L."/>
            <person name="Pitluck S."/>
            <person name="Ivanova N."/>
            <person name="Mavromatis K."/>
            <person name="Ovchinnikova G."/>
            <person name="Pati A."/>
            <person name="Chen A."/>
            <person name="Palaniappan K."/>
            <person name="Hauser L."/>
            <person name="Chang Y.J."/>
            <person name="Jefferies C.C."/>
            <person name="Saunders E."/>
            <person name="Brettin T."/>
            <person name="Detter J.C."/>
            <person name="Han C."/>
            <person name="Chain P."/>
            <person name="Bristow J."/>
            <person name="Eisen J.A."/>
            <person name="Markowitz V."/>
            <person name="Hugenholtz P."/>
            <person name="Kyrpides N.C."/>
            <person name="Klenk H.P."/>
            <person name="Lapidus A."/>
        </authorList>
    </citation>
    <scope>NUCLEOTIDE SEQUENCE [LARGE SCALE GENOMIC DNA]</scope>
    <source>
        <strain>ATCC BAA-8 / DSM 12333 / CCUG 43141 / JCM 11478 / NBRC 16432 / NCIMB 13614 / HKI 0122</strain>
    </source>
</reference>
<sequence>MPRAQLDKDPHDVAGMFDDVARRYDLTNDVLSLGMDRLWRRATLDALGARPGERVLDLAAGTGTSSADLADDGVDVVSCDFSTGMVAEGKRRRPDLAFVAGDATRLPFADGSFDAVTISFGLRNVSPAVAGLSEMLRVTRPGGRLVVAEFSTPPWAPFEALYGFYLQTFLTPLAKAVSSNPEAYDYLEESIRDWPDQLGVAALLHEAGWRGVGYRNLTGGIVALHRARKIATENTSAGRG</sequence>
<accession>C5C0T0</accession>
<dbReference type="EC" id="2.1.1.163" evidence="1"/>
<dbReference type="EMBL" id="CP001618">
    <property type="protein sequence ID" value="ACQ81476.1"/>
    <property type="molecule type" value="Genomic_DNA"/>
</dbReference>
<dbReference type="RefSeq" id="WP_015883714.1">
    <property type="nucleotide sequence ID" value="NC_012669.1"/>
</dbReference>
<dbReference type="SMR" id="C5C0T0"/>
<dbReference type="STRING" id="471853.Bcav_3232"/>
<dbReference type="KEGG" id="bcv:Bcav_3232"/>
<dbReference type="eggNOG" id="COG2226">
    <property type="taxonomic scope" value="Bacteria"/>
</dbReference>
<dbReference type="HOGENOM" id="CLU_037990_0_0_11"/>
<dbReference type="OrthoDB" id="9808140at2"/>
<dbReference type="UniPathway" id="UPA00079">
    <property type="reaction ID" value="UER00169"/>
</dbReference>
<dbReference type="Proteomes" id="UP000007962">
    <property type="component" value="Chromosome"/>
</dbReference>
<dbReference type="GO" id="GO:0043770">
    <property type="term" value="F:demethylmenaquinone methyltransferase activity"/>
    <property type="evidence" value="ECO:0007669"/>
    <property type="project" value="UniProtKB-UniRule"/>
</dbReference>
<dbReference type="GO" id="GO:0009234">
    <property type="term" value="P:menaquinone biosynthetic process"/>
    <property type="evidence" value="ECO:0007669"/>
    <property type="project" value="UniProtKB-UniRule"/>
</dbReference>
<dbReference type="GO" id="GO:0032259">
    <property type="term" value="P:methylation"/>
    <property type="evidence" value="ECO:0007669"/>
    <property type="project" value="UniProtKB-KW"/>
</dbReference>
<dbReference type="CDD" id="cd02440">
    <property type="entry name" value="AdoMet_MTases"/>
    <property type="match status" value="1"/>
</dbReference>
<dbReference type="Gene3D" id="3.40.50.150">
    <property type="entry name" value="Vaccinia Virus protein VP39"/>
    <property type="match status" value="1"/>
</dbReference>
<dbReference type="HAMAP" id="MF_01813">
    <property type="entry name" value="MenG_UbiE_methyltr"/>
    <property type="match status" value="1"/>
</dbReference>
<dbReference type="InterPro" id="IPR029063">
    <property type="entry name" value="SAM-dependent_MTases_sf"/>
</dbReference>
<dbReference type="InterPro" id="IPR004033">
    <property type="entry name" value="UbiE/COQ5_MeTrFase"/>
</dbReference>
<dbReference type="InterPro" id="IPR023576">
    <property type="entry name" value="UbiE/COQ5_MeTrFase_CS"/>
</dbReference>
<dbReference type="NCBIfam" id="TIGR01934">
    <property type="entry name" value="MenG_MenH_UbiE"/>
    <property type="match status" value="1"/>
</dbReference>
<dbReference type="NCBIfam" id="NF001241">
    <property type="entry name" value="PRK00216.1-2"/>
    <property type="match status" value="1"/>
</dbReference>
<dbReference type="PANTHER" id="PTHR43591:SF24">
    <property type="entry name" value="2-METHOXY-6-POLYPRENYL-1,4-BENZOQUINOL METHYLASE, MITOCHONDRIAL"/>
    <property type="match status" value="1"/>
</dbReference>
<dbReference type="PANTHER" id="PTHR43591">
    <property type="entry name" value="METHYLTRANSFERASE"/>
    <property type="match status" value="1"/>
</dbReference>
<dbReference type="Pfam" id="PF01209">
    <property type="entry name" value="Ubie_methyltran"/>
    <property type="match status" value="1"/>
</dbReference>
<dbReference type="SUPFAM" id="SSF53335">
    <property type="entry name" value="S-adenosyl-L-methionine-dependent methyltransferases"/>
    <property type="match status" value="1"/>
</dbReference>
<dbReference type="PROSITE" id="PS51608">
    <property type="entry name" value="SAM_MT_UBIE"/>
    <property type="match status" value="1"/>
</dbReference>
<dbReference type="PROSITE" id="PS01183">
    <property type="entry name" value="UBIE_1"/>
    <property type="match status" value="1"/>
</dbReference>
<dbReference type="PROSITE" id="PS01184">
    <property type="entry name" value="UBIE_2"/>
    <property type="match status" value="1"/>
</dbReference>
<feature type="chain" id="PRO_1000215981" description="Demethylmenaquinone methyltransferase">
    <location>
        <begin position="1"/>
        <end position="240"/>
    </location>
</feature>
<feature type="binding site" evidence="1">
    <location>
        <position position="62"/>
    </location>
    <ligand>
        <name>S-adenosyl-L-methionine</name>
        <dbReference type="ChEBI" id="CHEBI:59789"/>
    </ligand>
</feature>
<feature type="binding site" evidence="1">
    <location>
        <position position="80"/>
    </location>
    <ligand>
        <name>S-adenosyl-L-methionine</name>
        <dbReference type="ChEBI" id="CHEBI:59789"/>
    </ligand>
</feature>
<feature type="binding site" evidence="1">
    <location>
        <begin position="102"/>
        <end position="103"/>
    </location>
    <ligand>
        <name>S-adenosyl-L-methionine</name>
        <dbReference type="ChEBI" id="CHEBI:59789"/>
    </ligand>
</feature>
<feature type="binding site" evidence="1">
    <location>
        <position position="119"/>
    </location>
    <ligand>
        <name>S-adenosyl-L-methionine</name>
        <dbReference type="ChEBI" id="CHEBI:59789"/>
    </ligand>
</feature>